<reference key="1">
    <citation type="journal article" date="2006" name="Lancet">
        <title>Complete genome sequence of USA300, an epidemic clone of community-acquired meticillin-resistant Staphylococcus aureus.</title>
        <authorList>
            <person name="Diep B.A."/>
            <person name="Gill S.R."/>
            <person name="Chang R.F."/>
            <person name="Phan T.H."/>
            <person name="Chen J.H."/>
            <person name="Davidson M.G."/>
            <person name="Lin F."/>
            <person name="Lin J."/>
            <person name="Carleton H.A."/>
            <person name="Mongodin E.F."/>
            <person name="Sensabaugh G.F."/>
            <person name="Perdreau-Remington F."/>
        </authorList>
    </citation>
    <scope>NUCLEOTIDE SEQUENCE [LARGE SCALE GENOMIC DNA]</scope>
    <source>
        <strain>USA300</strain>
    </source>
</reference>
<sequence length="199" mass="23041">MAFKLPNLPYAYDALEPYIDQRTMEFHHDKHHNTYVTKLNATVEGTELEHQSLADMIANLDKVPEAMRMSVRNNGGGHFNHSLFWEILSPNSEEKGGVIDDIKAQWGTLDEFKNEFANKATTLFGSGWTWLVVNDGKLEIVTTPNQDNPLTEGKTPILLFDVWEHAYYLKYQNKRPDYMTAFWNIVNWKKVDELYQAAK</sequence>
<dbReference type="EC" id="1.15.1.1" evidence="2"/>
<dbReference type="EMBL" id="CP000255">
    <property type="protein sequence ID" value="ABD22339.1"/>
    <property type="molecule type" value="Genomic_DNA"/>
</dbReference>
<dbReference type="RefSeq" id="WP_000874681.1">
    <property type="nucleotide sequence ID" value="NZ_CP027476.1"/>
</dbReference>
<dbReference type="SMR" id="Q2FKC6"/>
<dbReference type="KEGG" id="saa:SAUSA300_0135"/>
<dbReference type="HOGENOM" id="CLU_031625_0_0_9"/>
<dbReference type="OMA" id="GSYEGWK"/>
<dbReference type="Proteomes" id="UP000001939">
    <property type="component" value="Chromosome"/>
</dbReference>
<dbReference type="GO" id="GO:0005737">
    <property type="term" value="C:cytoplasm"/>
    <property type="evidence" value="ECO:0007669"/>
    <property type="project" value="TreeGrafter"/>
</dbReference>
<dbReference type="GO" id="GO:0046872">
    <property type="term" value="F:metal ion binding"/>
    <property type="evidence" value="ECO:0007669"/>
    <property type="project" value="UniProtKB-KW"/>
</dbReference>
<dbReference type="GO" id="GO:0004784">
    <property type="term" value="F:superoxide dismutase activity"/>
    <property type="evidence" value="ECO:0007669"/>
    <property type="project" value="UniProtKB-EC"/>
</dbReference>
<dbReference type="FunFam" id="1.10.287.990:FF:000001">
    <property type="entry name" value="Superoxide dismutase"/>
    <property type="match status" value="1"/>
</dbReference>
<dbReference type="FunFam" id="3.55.40.20:FF:000001">
    <property type="entry name" value="Superoxide dismutase"/>
    <property type="match status" value="1"/>
</dbReference>
<dbReference type="Gene3D" id="1.10.287.990">
    <property type="entry name" value="Fe,Mn superoxide dismutase (SOD) domain"/>
    <property type="match status" value="1"/>
</dbReference>
<dbReference type="Gene3D" id="3.55.40.20">
    <property type="entry name" value="Iron/manganese superoxide dismutase, C-terminal domain"/>
    <property type="match status" value="1"/>
</dbReference>
<dbReference type="InterPro" id="IPR001189">
    <property type="entry name" value="Mn/Fe_SOD"/>
</dbReference>
<dbReference type="InterPro" id="IPR019833">
    <property type="entry name" value="Mn/Fe_SOD_BS"/>
</dbReference>
<dbReference type="InterPro" id="IPR019832">
    <property type="entry name" value="Mn/Fe_SOD_C"/>
</dbReference>
<dbReference type="InterPro" id="IPR019831">
    <property type="entry name" value="Mn/Fe_SOD_N"/>
</dbReference>
<dbReference type="InterPro" id="IPR036324">
    <property type="entry name" value="Mn/Fe_SOD_N_sf"/>
</dbReference>
<dbReference type="InterPro" id="IPR036314">
    <property type="entry name" value="SOD_C_sf"/>
</dbReference>
<dbReference type="PANTHER" id="PTHR43595">
    <property type="entry name" value="37S RIBOSOMAL PROTEIN S26, MITOCHONDRIAL"/>
    <property type="match status" value="1"/>
</dbReference>
<dbReference type="PANTHER" id="PTHR43595:SF2">
    <property type="entry name" value="SMALL RIBOSOMAL SUBUNIT PROTEIN MS42"/>
    <property type="match status" value="1"/>
</dbReference>
<dbReference type="Pfam" id="PF02777">
    <property type="entry name" value="Sod_Fe_C"/>
    <property type="match status" value="1"/>
</dbReference>
<dbReference type="Pfam" id="PF00081">
    <property type="entry name" value="Sod_Fe_N"/>
    <property type="match status" value="1"/>
</dbReference>
<dbReference type="PIRSF" id="PIRSF000349">
    <property type="entry name" value="SODismutase"/>
    <property type="match status" value="1"/>
</dbReference>
<dbReference type="PRINTS" id="PR01703">
    <property type="entry name" value="MNSODISMTASE"/>
</dbReference>
<dbReference type="SUPFAM" id="SSF54719">
    <property type="entry name" value="Fe,Mn superoxide dismutase (SOD), C-terminal domain"/>
    <property type="match status" value="1"/>
</dbReference>
<dbReference type="SUPFAM" id="SSF46609">
    <property type="entry name" value="Fe,Mn superoxide dismutase (SOD), N-terminal domain"/>
    <property type="match status" value="1"/>
</dbReference>
<dbReference type="PROSITE" id="PS00088">
    <property type="entry name" value="SOD_MN"/>
    <property type="match status" value="1"/>
</dbReference>
<evidence type="ECO:0000250" key="1"/>
<evidence type="ECO:0000250" key="2">
    <source>
        <dbReference type="UniProtKB" id="P80293"/>
    </source>
</evidence>
<evidence type="ECO:0000305" key="3"/>
<feature type="chain" id="PRO_0000293963" description="Superoxide dismutase [Mn/Fe] 2">
    <location>
        <begin position="1"/>
        <end position="199"/>
    </location>
</feature>
<feature type="binding site" evidence="2">
    <location>
        <position position="27"/>
    </location>
    <ligand>
        <name>Fe(3+)</name>
        <dbReference type="ChEBI" id="CHEBI:29034"/>
    </ligand>
</feature>
<feature type="binding site" evidence="2">
    <location>
        <position position="27"/>
    </location>
    <ligand>
        <name>Mn(2+)</name>
        <dbReference type="ChEBI" id="CHEBI:29035"/>
    </ligand>
</feature>
<feature type="binding site" evidence="2">
    <location>
        <position position="81"/>
    </location>
    <ligand>
        <name>Fe(3+)</name>
        <dbReference type="ChEBI" id="CHEBI:29034"/>
    </ligand>
</feature>
<feature type="binding site" evidence="2">
    <location>
        <position position="81"/>
    </location>
    <ligand>
        <name>Mn(2+)</name>
        <dbReference type="ChEBI" id="CHEBI:29035"/>
    </ligand>
</feature>
<feature type="binding site" evidence="2">
    <location>
        <position position="161"/>
    </location>
    <ligand>
        <name>Fe(3+)</name>
        <dbReference type="ChEBI" id="CHEBI:29034"/>
    </ligand>
</feature>
<feature type="binding site" evidence="2">
    <location>
        <position position="161"/>
    </location>
    <ligand>
        <name>Mn(2+)</name>
        <dbReference type="ChEBI" id="CHEBI:29035"/>
    </ligand>
</feature>
<feature type="binding site" evidence="2">
    <location>
        <position position="165"/>
    </location>
    <ligand>
        <name>Fe(3+)</name>
        <dbReference type="ChEBI" id="CHEBI:29034"/>
    </ligand>
</feature>
<feature type="binding site" evidence="2">
    <location>
        <position position="165"/>
    </location>
    <ligand>
        <name>Mn(2+)</name>
        <dbReference type="ChEBI" id="CHEBI:29035"/>
    </ligand>
</feature>
<comment type="function">
    <text evidence="2">Destroys superoxide anion radicals which are normally produced within the cells and which are toxic to biological systems. Catalyzes the dismutation of superoxide anion radicals into O2 and H2O2 by successive reduction and oxidation of the transition metal ion at the active site.</text>
</comment>
<comment type="catalytic activity">
    <reaction evidence="2">
        <text>2 superoxide + 2 H(+) = H2O2 + O2</text>
        <dbReference type="Rhea" id="RHEA:20696"/>
        <dbReference type="ChEBI" id="CHEBI:15378"/>
        <dbReference type="ChEBI" id="CHEBI:15379"/>
        <dbReference type="ChEBI" id="CHEBI:16240"/>
        <dbReference type="ChEBI" id="CHEBI:18421"/>
        <dbReference type="EC" id="1.15.1.1"/>
    </reaction>
    <physiologicalReaction direction="left-to-right" evidence="2">
        <dbReference type="Rhea" id="RHEA:20697"/>
    </physiologicalReaction>
</comment>
<comment type="cofactor">
    <cofactor evidence="2">
        <name>Mn(2+)</name>
        <dbReference type="ChEBI" id="CHEBI:29035"/>
    </cofactor>
    <cofactor evidence="2">
        <name>Fe(3+)</name>
        <dbReference type="ChEBI" id="CHEBI:29034"/>
    </cofactor>
    <text evidence="2">Binds 1 Mn(2+) or Fe(3+) ion per subunit.</text>
</comment>
<comment type="subunit">
    <text evidence="1">Homodimer. Can also form a heterodimer with SodA (By similarity).</text>
</comment>
<comment type="similarity">
    <text evidence="3">Belongs to the iron/manganese superoxide dismutase family.</text>
</comment>
<name>SODM2_STAA3</name>
<proteinExistence type="inferred from homology"/>
<keyword id="KW-0408">Iron</keyword>
<keyword id="KW-0464">Manganese</keyword>
<keyword id="KW-0479">Metal-binding</keyword>
<keyword id="KW-0560">Oxidoreductase</keyword>
<keyword id="KW-0346">Stress response</keyword>
<organism>
    <name type="scientific">Staphylococcus aureus (strain USA300)</name>
    <dbReference type="NCBI Taxonomy" id="367830"/>
    <lineage>
        <taxon>Bacteria</taxon>
        <taxon>Bacillati</taxon>
        <taxon>Bacillota</taxon>
        <taxon>Bacilli</taxon>
        <taxon>Bacillales</taxon>
        <taxon>Staphylococcaceae</taxon>
        <taxon>Staphylococcus</taxon>
    </lineage>
</organism>
<gene>
    <name type="primary">sodM</name>
    <name type="ordered locus">SAUSA300_0135</name>
</gene>
<accession>Q2FKC6</accession>
<protein>
    <recommendedName>
        <fullName>Superoxide dismutase [Mn/Fe] 2</fullName>
        <ecNumber evidence="2">1.15.1.1</ecNumber>
    </recommendedName>
</protein>